<protein>
    <recommendedName>
        <fullName evidence="1">Large ribosomal subunit protein uL11</fullName>
    </recommendedName>
    <alternativeName>
        <fullName evidence="2">50S ribosomal protein L11</fullName>
    </alternativeName>
</protein>
<feature type="chain" id="PRO_0000258119" description="Large ribosomal subunit protein uL11">
    <location>
        <begin position="1"/>
        <end position="143"/>
    </location>
</feature>
<proteinExistence type="inferred from homology"/>
<evidence type="ECO:0000255" key="1">
    <source>
        <dbReference type="HAMAP-Rule" id="MF_00736"/>
    </source>
</evidence>
<evidence type="ECO:0000305" key="2"/>
<reference key="1">
    <citation type="journal article" date="2005" name="Arch. Microbiol.">
        <title>The genome sequence of an anaerobic aromatic-degrading denitrifying bacterium, strain EbN1.</title>
        <authorList>
            <person name="Rabus R."/>
            <person name="Kube M."/>
            <person name="Heider J."/>
            <person name="Beck A."/>
            <person name="Heitmann K."/>
            <person name="Widdel F."/>
            <person name="Reinhardt R."/>
        </authorList>
    </citation>
    <scope>NUCLEOTIDE SEQUENCE [LARGE SCALE GENOMIC DNA]</scope>
    <source>
        <strain>DSM 19018 / LMG 30748 / EbN1</strain>
    </source>
</reference>
<keyword id="KW-0488">Methylation</keyword>
<keyword id="KW-1185">Reference proteome</keyword>
<keyword id="KW-0687">Ribonucleoprotein</keyword>
<keyword id="KW-0689">Ribosomal protein</keyword>
<keyword id="KW-0694">RNA-binding</keyword>
<keyword id="KW-0699">rRNA-binding</keyword>
<comment type="function">
    <text evidence="1">Forms part of the ribosomal stalk which helps the ribosome interact with GTP-bound translation factors.</text>
</comment>
<comment type="subunit">
    <text evidence="1">Part of the ribosomal stalk of the 50S ribosomal subunit. Interacts with L10 and the large rRNA to form the base of the stalk. L10 forms an elongated spine to which L12 dimers bind in a sequential fashion forming a multimeric L10(L12)X complex.</text>
</comment>
<comment type="PTM">
    <text evidence="1">One or more lysine residues are methylated.</text>
</comment>
<comment type="similarity">
    <text evidence="1">Belongs to the universal ribosomal protein uL11 family.</text>
</comment>
<dbReference type="EMBL" id="CR555306">
    <property type="protein sequence ID" value="CAI08271.1"/>
    <property type="molecule type" value="Genomic_DNA"/>
</dbReference>
<dbReference type="RefSeq" id="WP_011237962.1">
    <property type="nucleotide sequence ID" value="NC_006513.1"/>
</dbReference>
<dbReference type="SMR" id="Q5P343"/>
<dbReference type="STRING" id="76114.ebA3812"/>
<dbReference type="KEGG" id="eba:ebA3812"/>
<dbReference type="eggNOG" id="COG0080">
    <property type="taxonomic scope" value="Bacteria"/>
</dbReference>
<dbReference type="HOGENOM" id="CLU_074237_2_0_4"/>
<dbReference type="OrthoDB" id="9802408at2"/>
<dbReference type="Proteomes" id="UP000006552">
    <property type="component" value="Chromosome"/>
</dbReference>
<dbReference type="GO" id="GO:0022625">
    <property type="term" value="C:cytosolic large ribosomal subunit"/>
    <property type="evidence" value="ECO:0007669"/>
    <property type="project" value="TreeGrafter"/>
</dbReference>
<dbReference type="GO" id="GO:0070180">
    <property type="term" value="F:large ribosomal subunit rRNA binding"/>
    <property type="evidence" value="ECO:0007669"/>
    <property type="project" value="UniProtKB-UniRule"/>
</dbReference>
<dbReference type="GO" id="GO:0003735">
    <property type="term" value="F:structural constituent of ribosome"/>
    <property type="evidence" value="ECO:0007669"/>
    <property type="project" value="InterPro"/>
</dbReference>
<dbReference type="GO" id="GO:0006412">
    <property type="term" value="P:translation"/>
    <property type="evidence" value="ECO:0007669"/>
    <property type="project" value="UniProtKB-UniRule"/>
</dbReference>
<dbReference type="CDD" id="cd00349">
    <property type="entry name" value="Ribosomal_L11"/>
    <property type="match status" value="1"/>
</dbReference>
<dbReference type="FunFam" id="1.10.10.250:FF:000001">
    <property type="entry name" value="50S ribosomal protein L11"/>
    <property type="match status" value="1"/>
</dbReference>
<dbReference type="FunFam" id="3.30.1550.10:FF:000001">
    <property type="entry name" value="50S ribosomal protein L11"/>
    <property type="match status" value="1"/>
</dbReference>
<dbReference type="Gene3D" id="1.10.10.250">
    <property type="entry name" value="Ribosomal protein L11, C-terminal domain"/>
    <property type="match status" value="1"/>
</dbReference>
<dbReference type="Gene3D" id="3.30.1550.10">
    <property type="entry name" value="Ribosomal protein L11/L12, N-terminal domain"/>
    <property type="match status" value="1"/>
</dbReference>
<dbReference type="HAMAP" id="MF_00736">
    <property type="entry name" value="Ribosomal_uL11"/>
    <property type="match status" value="1"/>
</dbReference>
<dbReference type="InterPro" id="IPR000911">
    <property type="entry name" value="Ribosomal_uL11"/>
</dbReference>
<dbReference type="InterPro" id="IPR006519">
    <property type="entry name" value="Ribosomal_uL11_bac-typ"/>
</dbReference>
<dbReference type="InterPro" id="IPR020783">
    <property type="entry name" value="Ribosomal_uL11_C"/>
</dbReference>
<dbReference type="InterPro" id="IPR036769">
    <property type="entry name" value="Ribosomal_uL11_C_sf"/>
</dbReference>
<dbReference type="InterPro" id="IPR020785">
    <property type="entry name" value="Ribosomal_uL11_CS"/>
</dbReference>
<dbReference type="InterPro" id="IPR020784">
    <property type="entry name" value="Ribosomal_uL11_N"/>
</dbReference>
<dbReference type="InterPro" id="IPR036796">
    <property type="entry name" value="Ribosomal_uL11_N_sf"/>
</dbReference>
<dbReference type="NCBIfam" id="TIGR01632">
    <property type="entry name" value="L11_bact"/>
    <property type="match status" value="1"/>
</dbReference>
<dbReference type="PANTHER" id="PTHR11661">
    <property type="entry name" value="60S RIBOSOMAL PROTEIN L12"/>
    <property type="match status" value="1"/>
</dbReference>
<dbReference type="PANTHER" id="PTHR11661:SF1">
    <property type="entry name" value="LARGE RIBOSOMAL SUBUNIT PROTEIN UL11M"/>
    <property type="match status" value="1"/>
</dbReference>
<dbReference type="Pfam" id="PF00298">
    <property type="entry name" value="Ribosomal_L11"/>
    <property type="match status" value="1"/>
</dbReference>
<dbReference type="Pfam" id="PF03946">
    <property type="entry name" value="Ribosomal_L11_N"/>
    <property type="match status" value="1"/>
</dbReference>
<dbReference type="SMART" id="SM00649">
    <property type="entry name" value="RL11"/>
    <property type="match status" value="1"/>
</dbReference>
<dbReference type="SUPFAM" id="SSF54747">
    <property type="entry name" value="Ribosomal L11/L12e N-terminal domain"/>
    <property type="match status" value="1"/>
</dbReference>
<dbReference type="SUPFAM" id="SSF46906">
    <property type="entry name" value="Ribosomal protein L11, C-terminal domain"/>
    <property type="match status" value="1"/>
</dbReference>
<dbReference type="PROSITE" id="PS00359">
    <property type="entry name" value="RIBOSOMAL_L11"/>
    <property type="match status" value="1"/>
</dbReference>
<name>RL11_AROAE</name>
<sequence length="143" mass="15030">MAKKITGYIKLQVPAGKANPSPPIGPALGQRGLNIMEFCKAFNARTQGLEPGLPIPVVITAFADKSFTFIMKTPPATILIKKAAKITKGSPKPHTDKVGSITRAQVEEIAKTKMADLTAADMEAAVRTIAGSARSMGITVEGL</sequence>
<gene>
    <name evidence="1" type="primary">rplK</name>
    <name type="ordered locus">AZOSEA21460</name>
    <name type="ORF">ebA3812</name>
</gene>
<organism>
    <name type="scientific">Aromatoleum aromaticum (strain DSM 19018 / LMG 30748 / EbN1)</name>
    <name type="common">Azoarcus sp. (strain EbN1)</name>
    <dbReference type="NCBI Taxonomy" id="76114"/>
    <lineage>
        <taxon>Bacteria</taxon>
        <taxon>Pseudomonadati</taxon>
        <taxon>Pseudomonadota</taxon>
        <taxon>Betaproteobacteria</taxon>
        <taxon>Rhodocyclales</taxon>
        <taxon>Rhodocyclaceae</taxon>
        <taxon>Aromatoleum</taxon>
    </lineage>
</organism>
<accession>Q5P343</accession>